<reference key="1">
    <citation type="submission" date="2005-12" db="EMBL/GenBank/DDBJ databases">
        <title>Isolation and characterization of murine cDNA clones using newly constructed gene trap vector.</title>
        <authorList>
            <person name="Tashiro H."/>
            <person name="Moriguchi A."/>
            <person name="Noguchi M."/>
            <person name="Shirasaki R."/>
            <person name="Yoshida N."/>
            <person name="Shirafuji N."/>
        </authorList>
    </citation>
    <scope>NUCLEOTIDE SEQUENCE [LARGE SCALE MRNA]</scope>
</reference>
<feature type="chain" id="PRO_0000254621" description="eIF5-mimic protein 1">
    <location>
        <begin position="1"/>
        <end position="419"/>
    </location>
</feature>
<feature type="domain" description="W2" evidence="3">
    <location>
        <begin position="248"/>
        <end position="415"/>
    </location>
</feature>
<feature type="region of interest" description="Disordered" evidence="4">
    <location>
        <begin position="1"/>
        <end position="22"/>
    </location>
</feature>
<feature type="modified residue" description="N6-acetyllysine" evidence="2">
    <location>
        <position position="117"/>
    </location>
</feature>
<feature type="modified residue" description="Phosphoserine" evidence="2">
    <location>
        <position position="412"/>
    </location>
</feature>
<feature type="modified residue" description="Phosphoserine" evidence="2">
    <location>
        <position position="414"/>
    </location>
</feature>
<feature type="modified residue" description="Phosphoserine" evidence="1">
    <location>
        <position position="419"/>
    </location>
</feature>
<sequence length="419" mass="48063">MNKHQKPVLTGQRFKTRKRDEKEKFEPTVFRDTLVQGLNEAGDDLEAVAKFLDSTGSRLDYRRYADTLFDILVAGSMLAPGGTRIDDGDKTKMTNHCVFSANEDHETIRNYAQVFNKLIRRYKYLEKAFEDEMKKLLLFLKAFSEAEQTKLAMLSGILLGNGTLPATILTSLFTDSLVKEGIAASFAVKLFKAWMAEKDANSVTSSLRKANLDKRLLELFPVNRQSVDHFAKYFTDAGLKELSDFLRVQQSLGTRKELQKELQERLSQECPIKEVVLYVKEEMKRNDLPETAVIGLLWTCIMNAVEWNKKEELVAEQALKHLKQYAPLLAVFSSQGQSELVLLQKVQEYCYDNIHFMKAFQKIVVLFYKADVLSEEAILKWYKEAHAAKGKSVFLDQMKKFVEWLQNAEEESESEGEES</sequence>
<dbReference type="EMBL" id="AB244988">
    <property type="protein sequence ID" value="BAE79268.1"/>
    <property type="molecule type" value="mRNA"/>
</dbReference>
<dbReference type="CCDS" id="CCDS25884.1"/>
<dbReference type="SMR" id="Q2L4X1"/>
<dbReference type="AGR" id="MGI:1914162"/>
<dbReference type="MGI" id="MGI:1914162">
    <property type="gene designation" value="Bzw2"/>
</dbReference>
<dbReference type="GO" id="GO:0005737">
    <property type="term" value="C:cytoplasm"/>
    <property type="evidence" value="ECO:0000250"/>
    <property type="project" value="UniProtKB"/>
</dbReference>
<dbReference type="GO" id="GO:0016020">
    <property type="term" value="C:membrane"/>
    <property type="evidence" value="ECO:0007669"/>
    <property type="project" value="TreeGrafter"/>
</dbReference>
<dbReference type="GO" id="GO:0006446">
    <property type="term" value="P:regulation of translational initiation"/>
    <property type="evidence" value="ECO:0000250"/>
    <property type="project" value="UniProtKB"/>
</dbReference>
<dbReference type="CDD" id="cd11560">
    <property type="entry name" value="W2_eIF5C_like"/>
    <property type="match status" value="1"/>
</dbReference>
<dbReference type="FunFam" id="1.25.40.180:FF:000006">
    <property type="entry name" value="Basic leucine zipper and W2 domain-containing protein 1"/>
    <property type="match status" value="1"/>
</dbReference>
<dbReference type="Gene3D" id="1.25.40.180">
    <property type="match status" value="1"/>
</dbReference>
<dbReference type="InterPro" id="IPR016024">
    <property type="entry name" value="ARM-type_fold"/>
</dbReference>
<dbReference type="InterPro" id="IPR051245">
    <property type="entry name" value="eIF5-mimic_regulator"/>
</dbReference>
<dbReference type="InterPro" id="IPR043510">
    <property type="entry name" value="W2_BZW1/2"/>
</dbReference>
<dbReference type="InterPro" id="IPR003307">
    <property type="entry name" value="W2_domain"/>
</dbReference>
<dbReference type="PANTHER" id="PTHR14208">
    <property type="entry name" value="BASIC LEUCINE ZIPPER AND W2 DOMAIN-CONTAINING PROTEIN"/>
    <property type="match status" value="1"/>
</dbReference>
<dbReference type="PANTHER" id="PTHR14208:SF7">
    <property type="entry name" value="EIF5-MIMIC PROTEIN 1"/>
    <property type="match status" value="1"/>
</dbReference>
<dbReference type="Pfam" id="PF25504">
    <property type="entry name" value="HEAT_5MP1_2"/>
    <property type="match status" value="1"/>
</dbReference>
<dbReference type="Pfam" id="PF02020">
    <property type="entry name" value="W2"/>
    <property type="match status" value="1"/>
</dbReference>
<dbReference type="SMART" id="SM00515">
    <property type="entry name" value="eIF5C"/>
    <property type="match status" value="1"/>
</dbReference>
<dbReference type="SUPFAM" id="SSF48371">
    <property type="entry name" value="ARM repeat"/>
    <property type="match status" value="1"/>
</dbReference>
<dbReference type="PROSITE" id="PS51363">
    <property type="entry name" value="W2"/>
    <property type="match status" value="1"/>
</dbReference>
<evidence type="ECO:0000250" key="1">
    <source>
        <dbReference type="UniProtKB" id="Q9WTT7"/>
    </source>
</evidence>
<evidence type="ECO:0000250" key="2">
    <source>
        <dbReference type="UniProtKB" id="Q9Y6E2"/>
    </source>
</evidence>
<evidence type="ECO:0000255" key="3">
    <source>
        <dbReference type="PROSITE-ProRule" id="PRU00695"/>
    </source>
</evidence>
<evidence type="ECO:0000256" key="4">
    <source>
        <dbReference type="SAM" id="MobiDB-lite"/>
    </source>
</evidence>
<evidence type="ECO:0000305" key="5"/>
<proteinExistence type="evidence at transcript level"/>
<comment type="function">
    <text evidence="2">Translation initiation regulator which represses non-AUG initiated translation and repeat-associated non-AUG (RAN) initiated translation by acting as a competitive inhibitor of eukaryotic translation initiation factor 5 (EIF5) function (By similarity). Increases the accuracy of translation initiation by impeding EIF5-dependent translation from non-AUG codons by competing with it for interaction with EIF2S2 within the 43S pre-initiation complex (PIC) in an EIF3C-binding dependent manner (By similarity).</text>
</comment>
<comment type="subunit">
    <text evidence="2">Interacts with EIF3E, EIF2S2 and EIF3C.</text>
</comment>
<comment type="subcellular location">
    <subcellularLocation>
        <location evidence="2">Cytoplasm</location>
    </subcellularLocation>
</comment>
<comment type="similarity">
    <text evidence="5">Belongs to the BZW family.</text>
</comment>
<gene>
    <name type="primary">Bzw2</name>
    <name evidence="2" type="synonym">5mp1</name>
    <name type="synonym">Bdm2</name>
</gene>
<protein>
    <recommendedName>
        <fullName evidence="2">eIF5-mimic protein 1</fullName>
    </recommendedName>
    <alternativeName>
        <fullName>Basic leucine zipper and W2 domain-containing protein 2</fullName>
    </alternativeName>
    <alternativeName>
        <fullName>Brain development-related molecule 2</fullName>
    </alternativeName>
</protein>
<keyword id="KW-0007">Acetylation</keyword>
<keyword id="KW-0963">Cytoplasm</keyword>
<keyword id="KW-0597">Phosphoprotein</keyword>
<keyword id="KW-0810">Translation regulation</keyword>
<organism>
    <name type="scientific">Mus musculus molossinus</name>
    <name type="common">Japanese house mouse</name>
    <dbReference type="NCBI Taxonomy" id="57486"/>
    <lineage>
        <taxon>Eukaryota</taxon>
        <taxon>Metazoa</taxon>
        <taxon>Chordata</taxon>
        <taxon>Craniata</taxon>
        <taxon>Vertebrata</taxon>
        <taxon>Euteleostomi</taxon>
        <taxon>Mammalia</taxon>
        <taxon>Eutheria</taxon>
        <taxon>Euarchontoglires</taxon>
        <taxon>Glires</taxon>
        <taxon>Rodentia</taxon>
        <taxon>Myomorpha</taxon>
        <taxon>Muroidea</taxon>
        <taxon>Muridae</taxon>
        <taxon>Murinae</taxon>
        <taxon>Mus</taxon>
        <taxon>Mus</taxon>
    </lineage>
</organism>
<accession>Q2L4X1</accession>
<name>5MP1_MUSMM</name>